<protein>
    <recommendedName>
        <fullName evidence="1">Protein-methionine-sulfoxide reductase catalytic subunit MsrP</fullName>
        <ecNumber evidence="1">1.8.5.-</ecNumber>
    </recommendedName>
</protein>
<name>MSRP_SHISS</name>
<proteinExistence type="inferred from homology"/>
<accession>Q3Z0L8</accession>
<dbReference type="EC" id="1.8.5.-" evidence="1"/>
<dbReference type="EMBL" id="CP000038">
    <property type="protein sequence ID" value="AAZ88694.1"/>
    <property type="molecule type" value="Genomic_DNA"/>
</dbReference>
<dbReference type="RefSeq" id="WP_000740103.1">
    <property type="nucleotide sequence ID" value="NC_007384.1"/>
</dbReference>
<dbReference type="SMR" id="Q3Z0L8"/>
<dbReference type="GeneID" id="93775215"/>
<dbReference type="KEGG" id="ssn:SSON_2030"/>
<dbReference type="HOGENOM" id="CLU_045520_0_0_6"/>
<dbReference type="Proteomes" id="UP000002529">
    <property type="component" value="Chromosome"/>
</dbReference>
<dbReference type="GO" id="GO:0042597">
    <property type="term" value="C:periplasmic space"/>
    <property type="evidence" value="ECO:0007669"/>
    <property type="project" value="UniProtKB-SubCell"/>
</dbReference>
<dbReference type="GO" id="GO:0046872">
    <property type="term" value="F:metal ion binding"/>
    <property type="evidence" value="ECO:0007669"/>
    <property type="project" value="UniProtKB-KW"/>
</dbReference>
<dbReference type="GO" id="GO:0043546">
    <property type="term" value="F:molybdopterin cofactor binding"/>
    <property type="evidence" value="ECO:0007669"/>
    <property type="project" value="UniProtKB-UniRule"/>
</dbReference>
<dbReference type="GO" id="GO:0016672">
    <property type="term" value="F:oxidoreductase activity, acting on a sulfur group of donors, quinone or similar compound as acceptor"/>
    <property type="evidence" value="ECO:0007669"/>
    <property type="project" value="UniProtKB-UniRule"/>
</dbReference>
<dbReference type="GO" id="GO:0030091">
    <property type="term" value="P:protein repair"/>
    <property type="evidence" value="ECO:0007669"/>
    <property type="project" value="UniProtKB-UniRule"/>
</dbReference>
<dbReference type="CDD" id="cd02107">
    <property type="entry name" value="YedY_like_Moco"/>
    <property type="match status" value="1"/>
</dbReference>
<dbReference type="FunFam" id="3.90.420.10:FF:000001">
    <property type="entry name" value="Protein-methionine-sulfoxide reductase catalytic subunit MsrP"/>
    <property type="match status" value="1"/>
</dbReference>
<dbReference type="Gene3D" id="3.90.420.10">
    <property type="entry name" value="Oxidoreductase, molybdopterin-binding domain"/>
    <property type="match status" value="1"/>
</dbReference>
<dbReference type="HAMAP" id="MF_01206">
    <property type="entry name" value="MsrP"/>
    <property type="match status" value="1"/>
</dbReference>
<dbReference type="InterPro" id="IPR022867">
    <property type="entry name" value="MsrP"/>
</dbReference>
<dbReference type="InterPro" id="IPR000572">
    <property type="entry name" value="OxRdtase_Mopterin-bd_dom"/>
</dbReference>
<dbReference type="InterPro" id="IPR036374">
    <property type="entry name" value="OxRdtase_Mopterin-bd_sf"/>
</dbReference>
<dbReference type="InterPro" id="IPR006311">
    <property type="entry name" value="TAT_signal"/>
</dbReference>
<dbReference type="NCBIfam" id="NF003767">
    <property type="entry name" value="PRK05363.1"/>
    <property type="match status" value="1"/>
</dbReference>
<dbReference type="PANTHER" id="PTHR43032">
    <property type="entry name" value="PROTEIN-METHIONINE-SULFOXIDE REDUCTASE"/>
    <property type="match status" value="1"/>
</dbReference>
<dbReference type="PANTHER" id="PTHR43032:SF3">
    <property type="entry name" value="PROTEIN-METHIONINE-SULFOXIDE REDUCTASE CATALYTIC SUBUNIT MSRP"/>
    <property type="match status" value="1"/>
</dbReference>
<dbReference type="Pfam" id="PF00174">
    <property type="entry name" value="Oxidored_molyb"/>
    <property type="match status" value="1"/>
</dbReference>
<dbReference type="SUPFAM" id="SSF56524">
    <property type="entry name" value="Oxidoreductase molybdopterin-binding domain"/>
    <property type="match status" value="1"/>
</dbReference>
<dbReference type="PROSITE" id="PS51318">
    <property type="entry name" value="TAT"/>
    <property type="match status" value="1"/>
</dbReference>
<comment type="function">
    <text evidence="1">Part of the MsrPQ system that repairs oxidized periplasmic proteins containing methionine sulfoxide residues (Met-O), using respiratory chain electrons. Thus protects these proteins from oxidative-stress damage caused by reactive species of oxygen and chlorine generated by the host defense mechanisms. MsrPQ is essential for the maintenance of envelope integrity under bleach stress, rescuing a wide series of structurally unrelated periplasmic proteins from methionine oxidation, including the primary periplasmic chaperone SurA and the lipoprotein Pal. The catalytic subunit MsrP is non-stereospecific, being able to reduce both (R-) and (S-) diastereoisomers of methionine sulfoxide.</text>
</comment>
<comment type="catalytic activity">
    <reaction evidence="1">
        <text>L-methionyl-[protein] + a quinone + H2O = L-methionyl-(S)-S-oxide-[protein] + a quinol</text>
        <dbReference type="Rhea" id="RHEA:51292"/>
        <dbReference type="Rhea" id="RHEA-COMP:12313"/>
        <dbReference type="Rhea" id="RHEA-COMP:12315"/>
        <dbReference type="ChEBI" id="CHEBI:15377"/>
        <dbReference type="ChEBI" id="CHEBI:16044"/>
        <dbReference type="ChEBI" id="CHEBI:24646"/>
        <dbReference type="ChEBI" id="CHEBI:44120"/>
        <dbReference type="ChEBI" id="CHEBI:132124"/>
    </reaction>
</comment>
<comment type="catalytic activity">
    <reaction evidence="1">
        <text>L-methionyl-[protein] + a quinone + H2O = L-methionyl-(R)-S-oxide-[protein] + a quinol</text>
        <dbReference type="Rhea" id="RHEA:51296"/>
        <dbReference type="Rhea" id="RHEA-COMP:12313"/>
        <dbReference type="Rhea" id="RHEA-COMP:12314"/>
        <dbReference type="ChEBI" id="CHEBI:15377"/>
        <dbReference type="ChEBI" id="CHEBI:16044"/>
        <dbReference type="ChEBI" id="CHEBI:24646"/>
        <dbReference type="ChEBI" id="CHEBI:45764"/>
        <dbReference type="ChEBI" id="CHEBI:132124"/>
    </reaction>
</comment>
<comment type="cofactor">
    <cofactor evidence="1">
        <name>Mo-molybdopterin</name>
        <dbReference type="ChEBI" id="CHEBI:71302"/>
    </cofactor>
    <text evidence="1">Binds 1 Mo-molybdopterin (Mo-MPT) cofactor per subunit.</text>
</comment>
<comment type="subunit">
    <text evidence="1">Heterodimer of a catalytic subunit (MsrP) and a heme-binding subunit (MsrQ).</text>
</comment>
<comment type="subcellular location">
    <subcellularLocation>
        <location evidence="1">Periplasm</location>
    </subcellularLocation>
    <text evidence="1">Is attached to the inner membrane when interacting with the MsrQ subunit.</text>
</comment>
<comment type="PTM">
    <text evidence="1">Predicted to be exported by the Tat system. The position of the signal peptide cleavage has not been experimentally proven.</text>
</comment>
<comment type="similarity">
    <text evidence="1">Belongs to the MsrP family.</text>
</comment>
<keyword id="KW-0479">Metal-binding</keyword>
<keyword id="KW-0500">Molybdenum</keyword>
<keyword id="KW-0560">Oxidoreductase</keyword>
<keyword id="KW-0574">Periplasm</keyword>
<keyword id="KW-1185">Reference proteome</keyword>
<keyword id="KW-0732">Signal</keyword>
<organism>
    <name type="scientific">Shigella sonnei (strain Ss046)</name>
    <dbReference type="NCBI Taxonomy" id="300269"/>
    <lineage>
        <taxon>Bacteria</taxon>
        <taxon>Pseudomonadati</taxon>
        <taxon>Pseudomonadota</taxon>
        <taxon>Gammaproteobacteria</taxon>
        <taxon>Enterobacterales</taxon>
        <taxon>Enterobacteriaceae</taxon>
        <taxon>Shigella</taxon>
    </lineage>
</organism>
<sequence length="334" mass="37441">MKKNQFLKESDVTAESVFFMKRRQVLKALGISAAALSLPHAAHADLLSWFKGNDRPPAPAGKPLEFSKPTAWQNNLPLTPVDKVSGYNNFYEFGLDKADPAANAGSLKTDPWTLKISGEVAKPLTLDHDDLTRRFPLEERIYRMRCVEAWSMVVPWIGFPLHKLLALAEPTSNAKYVAFETIYAPEQMPGQQDRFIGGGLKYPYVEGLRLDEAMHPLTLMTVGVYGKALPPQNGAPVRLIVPWKYGFKGIKSIVSIKLTRERPPTTWNLAAPDEYGFYANVNPHVDHPRWSQATERFIGSGGILDVQRQPTLLFNGYADQVASLYRGLDLRENF</sequence>
<feature type="signal peptide" description="Tat-type signal" evidence="1">
    <location>
        <begin position="1"/>
        <end position="44"/>
    </location>
</feature>
<feature type="chain" id="PRO_1000066166" description="Protein-methionine-sulfoxide reductase catalytic subunit MsrP" evidence="1">
    <location>
        <begin position="45"/>
        <end position="334"/>
    </location>
</feature>
<feature type="binding site" evidence="1">
    <location>
        <position position="88"/>
    </location>
    <ligand>
        <name>Mo-molybdopterin</name>
        <dbReference type="ChEBI" id="CHEBI:71302"/>
    </ligand>
</feature>
<feature type="binding site" evidence="1">
    <location>
        <begin position="91"/>
        <end position="92"/>
    </location>
    <ligand>
        <name>Mo-molybdopterin</name>
        <dbReference type="ChEBI" id="CHEBI:71302"/>
    </ligand>
</feature>
<feature type="binding site" evidence="1">
    <location>
        <position position="146"/>
    </location>
    <ligand>
        <name>Mo-molybdopterin</name>
        <dbReference type="ChEBI" id="CHEBI:71302"/>
    </ligand>
    <ligandPart>
        <name>Mo</name>
        <dbReference type="ChEBI" id="CHEBI:28685"/>
    </ligandPart>
</feature>
<feature type="binding site" evidence="1">
    <location>
        <position position="181"/>
    </location>
    <ligand>
        <name>Mo-molybdopterin</name>
        <dbReference type="ChEBI" id="CHEBI:71302"/>
    </ligand>
</feature>
<feature type="binding site" evidence="1">
    <location>
        <position position="233"/>
    </location>
    <ligand>
        <name>Mo-molybdopterin</name>
        <dbReference type="ChEBI" id="CHEBI:71302"/>
    </ligand>
</feature>
<feature type="binding site" evidence="1">
    <location>
        <position position="238"/>
    </location>
    <ligand>
        <name>Mo-molybdopterin</name>
        <dbReference type="ChEBI" id="CHEBI:71302"/>
    </ligand>
</feature>
<feature type="binding site" evidence="1">
    <location>
        <begin position="249"/>
        <end position="251"/>
    </location>
    <ligand>
        <name>Mo-molybdopterin</name>
        <dbReference type="ChEBI" id="CHEBI:71302"/>
    </ligand>
</feature>
<gene>
    <name evidence="1" type="primary">msrP</name>
    <name type="ordered locus">SSON_2030</name>
</gene>
<evidence type="ECO:0000255" key="1">
    <source>
        <dbReference type="HAMAP-Rule" id="MF_01206"/>
    </source>
</evidence>
<reference key="1">
    <citation type="journal article" date="2005" name="Nucleic Acids Res.">
        <title>Genome dynamics and diversity of Shigella species, the etiologic agents of bacillary dysentery.</title>
        <authorList>
            <person name="Yang F."/>
            <person name="Yang J."/>
            <person name="Zhang X."/>
            <person name="Chen L."/>
            <person name="Jiang Y."/>
            <person name="Yan Y."/>
            <person name="Tang X."/>
            <person name="Wang J."/>
            <person name="Xiong Z."/>
            <person name="Dong J."/>
            <person name="Xue Y."/>
            <person name="Zhu Y."/>
            <person name="Xu X."/>
            <person name="Sun L."/>
            <person name="Chen S."/>
            <person name="Nie H."/>
            <person name="Peng J."/>
            <person name="Xu J."/>
            <person name="Wang Y."/>
            <person name="Yuan Z."/>
            <person name="Wen Y."/>
            <person name="Yao Z."/>
            <person name="Shen Y."/>
            <person name="Qiang B."/>
            <person name="Hou Y."/>
            <person name="Yu J."/>
            <person name="Jin Q."/>
        </authorList>
    </citation>
    <scope>NUCLEOTIDE SEQUENCE [LARGE SCALE GENOMIC DNA]</scope>
    <source>
        <strain>Ss046</strain>
    </source>
</reference>